<comment type="similarity">
    <text evidence="1">Belongs to the bacterial ribosomal protein bL34 family.</text>
</comment>
<gene>
    <name evidence="1" type="primary">rpmH</name>
    <name type="ordered locus">VIBHAR_00438</name>
</gene>
<evidence type="ECO:0000255" key="1">
    <source>
        <dbReference type="HAMAP-Rule" id="MF_00391"/>
    </source>
</evidence>
<evidence type="ECO:0000305" key="2"/>
<organism>
    <name type="scientific">Vibrio campbellii (strain ATCC BAA-1116)</name>
    <dbReference type="NCBI Taxonomy" id="2902295"/>
    <lineage>
        <taxon>Bacteria</taxon>
        <taxon>Pseudomonadati</taxon>
        <taxon>Pseudomonadota</taxon>
        <taxon>Gammaproteobacteria</taxon>
        <taxon>Vibrionales</taxon>
        <taxon>Vibrionaceae</taxon>
        <taxon>Vibrio</taxon>
    </lineage>
</organism>
<reference key="1">
    <citation type="submission" date="2007-08" db="EMBL/GenBank/DDBJ databases">
        <authorList>
            <consortium name="The Vibrio harveyi Genome Sequencing Project"/>
            <person name="Bassler B."/>
            <person name="Clifton S.W."/>
            <person name="Fulton L."/>
            <person name="Delehaunty K."/>
            <person name="Fronick C."/>
            <person name="Harrison M."/>
            <person name="Markivic C."/>
            <person name="Fulton R."/>
            <person name="Tin-Wollam A.-M."/>
            <person name="Shah N."/>
            <person name="Pepin K."/>
            <person name="Nash W."/>
            <person name="Thiruvilangam P."/>
            <person name="Bhonagiri V."/>
            <person name="Waters C."/>
            <person name="Tu K.C."/>
            <person name="Irgon J."/>
            <person name="Wilson R.K."/>
        </authorList>
    </citation>
    <scope>NUCLEOTIDE SEQUENCE [LARGE SCALE GENOMIC DNA]</scope>
    <source>
        <strain>ATCC BAA-1116 / BB120</strain>
    </source>
</reference>
<accession>A7N1E5</accession>
<name>RL34_VIBC1</name>
<proteinExistence type="inferred from homology"/>
<protein>
    <recommendedName>
        <fullName evidence="1">Large ribosomal subunit protein bL34</fullName>
    </recommendedName>
    <alternativeName>
        <fullName evidence="2">50S ribosomal protein L34</fullName>
    </alternativeName>
</protein>
<feature type="chain" id="PRO_1000013490" description="Large ribosomal subunit protein bL34">
    <location>
        <begin position="1"/>
        <end position="44"/>
    </location>
</feature>
<sequence>MKRTFQPTVLKRKRTHGFRARMATKNGRKVINARRAKGRARLSK</sequence>
<keyword id="KW-0687">Ribonucleoprotein</keyword>
<keyword id="KW-0689">Ribosomal protein</keyword>
<dbReference type="EMBL" id="CP000789">
    <property type="protein sequence ID" value="ABU69453.1"/>
    <property type="molecule type" value="Genomic_DNA"/>
</dbReference>
<dbReference type="RefSeq" id="WP_005378825.1">
    <property type="nucleotide sequence ID" value="NC_022269.1"/>
</dbReference>
<dbReference type="SMR" id="A7N1E5"/>
<dbReference type="GeneID" id="96872182"/>
<dbReference type="KEGG" id="vha:VIBHAR_00438"/>
<dbReference type="PATRIC" id="fig|338187.25.peg.2152"/>
<dbReference type="Proteomes" id="UP000008152">
    <property type="component" value="Chromosome I"/>
</dbReference>
<dbReference type="GO" id="GO:1990904">
    <property type="term" value="C:ribonucleoprotein complex"/>
    <property type="evidence" value="ECO:0007669"/>
    <property type="project" value="UniProtKB-KW"/>
</dbReference>
<dbReference type="GO" id="GO:0005840">
    <property type="term" value="C:ribosome"/>
    <property type="evidence" value="ECO:0007669"/>
    <property type="project" value="UniProtKB-KW"/>
</dbReference>
<dbReference type="GO" id="GO:0003735">
    <property type="term" value="F:structural constituent of ribosome"/>
    <property type="evidence" value="ECO:0007669"/>
    <property type="project" value="InterPro"/>
</dbReference>
<dbReference type="GO" id="GO:0006412">
    <property type="term" value="P:translation"/>
    <property type="evidence" value="ECO:0007669"/>
    <property type="project" value="UniProtKB-UniRule"/>
</dbReference>
<dbReference type="FunFam" id="1.10.287.3980:FF:000001">
    <property type="entry name" value="Mitochondrial ribosomal protein L34"/>
    <property type="match status" value="1"/>
</dbReference>
<dbReference type="Gene3D" id="1.10.287.3980">
    <property type="match status" value="1"/>
</dbReference>
<dbReference type="HAMAP" id="MF_00391">
    <property type="entry name" value="Ribosomal_bL34"/>
    <property type="match status" value="1"/>
</dbReference>
<dbReference type="InterPro" id="IPR000271">
    <property type="entry name" value="Ribosomal_bL34"/>
</dbReference>
<dbReference type="InterPro" id="IPR020939">
    <property type="entry name" value="Ribosomal_bL34_CS"/>
</dbReference>
<dbReference type="NCBIfam" id="TIGR01030">
    <property type="entry name" value="rpmH_bact"/>
    <property type="match status" value="1"/>
</dbReference>
<dbReference type="PANTHER" id="PTHR14503:SF4">
    <property type="entry name" value="LARGE RIBOSOMAL SUBUNIT PROTEIN BL34M"/>
    <property type="match status" value="1"/>
</dbReference>
<dbReference type="PANTHER" id="PTHR14503">
    <property type="entry name" value="MITOCHONDRIAL RIBOSOMAL PROTEIN 34 FAMILY MEMBER"/>
    <property type="match status" value="1"/>
</dbReference>
<dbReference type="Pfam" id="PF00468">
    <property type="entry name" value="Ribosomal_L34"/>
    <property type="match status" value="1"/>
</dbReference>
<dbReference type="PROSITE" id="PS00784">
    <property type="entry name" value="RIBOSOMAL_L34"/>
    <property type="match status" value="1"/>
</dbReference>